<name>RK19_RHDSA</name>
<accession>A6MVP4</accession>
<protein>
    <recommendedName>
        <fullName evidence="1">Large ribosomal subunit protein bL19c</fullName>
    </recommendedName>
    <alternativeName>
        <fullName>50S ribosomal protein L19, chloroplastic</fullName>
    </alternativeName>
</protein>
<sequence>MELKVSLNPIHIKELEQNYINSNMPDVGVGDTVKIGVLITEGNKERVQFSEGVVISKNNNGLNTTVTVRRVLQGIGVERIYLVNSPKLKSFEILRRSKIRRSKLYYLRSRVGKATRLQQRFN</sequence>
<evidence type="ECO:0000305" key="1"/>
<reference key="1">
    <citation type="journal article" date="2007" name="Mol. Biol. Evol.">
        <title>Plastid genome sequence of the cryptophyte alga Rhodomonas salina CCMP1319: lateral transfer of putative DNA replication machinery and a test of chromist plastid phylogeny.</title>
        <authorList>
            <person name="Khan H."/>
            <person name="Parks N."/>
            <person name="Kozera C."/>
            <person name="Curtis B.A."/>
            <person name="Parsons B.J."/>
            <person name="Bowman S."/>
            <person name="Archibald J.M."/>
        </authorList>
    </citation>
    <scope>NUCLEOTIDE SEQUENCE [LARGE SCALE GENOMIC DNA]</scope>
    <source>
        <strain>CCMP1319 / NEPCC76 / CS-174</strain>
    </source>
</reference>
<proteinExistence type="inferred from homology"/>
<keyword id="KW-0150">Chloroplast</keyword>
<keyword id="KW-0934">Plastid</keyword>
<keyword id="KW-0687">Ribonucleoprotein</keyword>
<keyword id="KW-0689">Ribosomal protein</keyword>
<comment type="subcellular location">
    <subcellularLocation>
        <location>Plastid</location>
        <location>Chloroplast</location>
    </subcellularLocation>
</comment>
<comment type="similarity">
    <text evidence="1">Belongs to the bacterial ribosomal protein bL19 family.</text>
</comment>
<feature type="chain" id="PRO_0000297716" description="Large ribosomal subunit protein bL19c">
    <location>
        <begin position="1"/>
        <end position="122"/>
    </location>
</feature>
<dbReference type="EMBL" id="EF508371">
    <property type="protein sequence ID" value="ABO70866.1"/>
    <property type="molecule type" value="Genomic_DNA"/>
</dbReference>
<dbReference type="RefSeq" id="YP_001293473.1">
    <property type="nucleotide sequence ID" value="NC_009573.1"/>
</dbReference>
<dbReference type="SMR" id="A6MVP4"/>
<dbReference type="GeneID" id="5228677"/>
<dbReference type="GO" id="GO:0009507">
    <property type="term" value="C:chloroplast"/>
    <property type="evidence" value="ECO:0007669"/>
    <property type="project" value="UniProtKB-SubCell"/>
</dbReference>
<dbReference type="GO" id="GO:0005762">
    <property type="term" value="C:mitochondrial large ribosomal subunit"/>
    <property type="evidence" value="ECO:0007669"/>
    <property type="project" value="TreeGrafter"/>
</dbReference>
<dbReference type="GO" id="GO:0003735">
    <property type="term" value="F:structural constituent of ribosome"/>
    <property type="evidence" value="ECO:0007669"/>
    <property type="project" value="InterPro"/>
</dbReference>
<dbReference type="GO" id="GO:0006412">
    <property type="term" value="P:translation"/>
    <property type="evidence" value="ECO:0007669"/>
    <property type="project" value="UniProtKB-UniRule"/>
</dbReference>
<dbReference type="Gene3D" id="2.30.30.790">
    <property type="match status" value="1"/>
</dbReference>
<dbReference type="HAMAP" id="MF_00402">
    <property type="entry name" value="Ribosomal_bL19"/>
    <property type="match status" value="1"/>
</dbReference>
<dbReference type="InterPro" id="IPR001857">
    <property type="entry name" value="Ribosomal_bL19"/>
</dbReference>
<dbReference type="InterPro" id="IPR018257">
    <property type="entry name" value="Ribosomal_bL19_CS"/>
</dbReference>
<dbReference type="InterPro" id="IPR038657">
    <property type="entry name" value="Ribosomal_bL19_sf"/>
</dbReference>
<dbReference type="InterPro" id="IPR008991">
    <property type="entry name" value="Translation_prot_SH3-like_sf"/>
</dbReference>
<dbReference type="NCBIfam" id="TIGR01024">
    <property type="entry name" value="rplS_bact"/>
    <property type="match status" value="1"/>
</dbReference>
<dbReference type="PANTHER" id="PTHR15680:SF9">
    <property type="entry name" value="LARGE RIBOSOMAL SUBUNIT PROTEIN BL19M"/>
    <property type="match status" value="1"/>
</dbReference>
<dbReference type="PANTHER" id="PTHR15680">
    <property type="entry name" value="RIBOSOMAL PROTEIN L19"/>
    <property type="match status" value="1"/>
</dbReference>
<dbReference type="Pfam" id="PF01245">
    <property type="entry name" value="Ribosomal_L19"/>
    <property type="match status" value="1"/>
</dbReference>
<dbReference type="PIRSF" id="PIRSF002191">
    <property type="entry name" value="Ribosomal_L19"/>
    <property type="match status" value="1"/>
</dbReference>
<dbReference type="PRINTS" id="PR00061">
    <property type="entry name" value="RIBOSOMALL19"/>
</dbReference>
<dbReference type="SUPFAM" id="SSF50104">
    <property type="entry name" value="Translation proteins SH3-like domain"/>
    <property type="match status" value="1"/>
</dbReference>
<dbReference type="PROSITE" id="PS01015">
    <property type="entry name" value="RIBOSOMAL_L19"/>
    <property type="match status" value="1"/>
</dbReference>
<geneLocation type="chloroplast"/>
<organism>
    <name type="scientific">Rhodomonas salina</name>
    <name type="common">Cryptomonas salina</name>
    <dbReference type="NCBI Taxonomy" id="52970"/>
    <lineage>
        <taxon>Eukaryota</taxon>
        <taxon>Cryptophyceae</taxon>
        <taxon>Pyrenomonadales</taxon>
        <taxon>Pyrenomonadaceae</taxon>
        <taxon>Rhodomonas</taxon>
    </lineage>
</organism>
<gene>
    <name type="primary">rpl19</name>
</gene>